<reference key="1">
    <citation type="journal article" date="1996" name="Biochimie">
        <title>Structure and regulation of the Salmonella typhimurium rnc-era-recO operon.</title>
        <authorList>
            <person name="Anderson P.E."/>
            <person name="Matsunaga J."/>
            <person name="Simons E.L."/>
            <person name="Simons R.W."/>
        </authorList>
    </citation>
    <scope>NUCLEOTIDE SEQUENCE [GENOMIC DNA]</scope>
    <source>
        <strain>TSM117</strain>
    </source>
</reference>
<reference key="2">
    <citation type="journal article" date="2001" name="Nature">
        <title>Complete genome sequence of Salmonella enterica serovar Typhimurium LT2.</title>
        <authorList>
            <person name="McClelland M."/>
            <person name="Sanderson K.E."/>
            <person name="Spieth J."/>
            <person name="Clifton S.W."/>
            <person name="Latreille P."/>
            <person name="Courtney L."/>
            <person name="Porwollik S."/>
            <person name="Ali J."/>
            <person name="Dante M."/>
            <person name="Du F."/>
            <person name="Hou S."/>
            <person name="Layman D."/>
            <person name="Leonard S."/>
            <person name="Nguyen C."/>
            <person name="Scott K."/>
            <person name="Holmes A."/>
            <person name="Grewal N."/>
            <person name="Mulvaney E."/>
            <person name="Ryan E."/>
            <person name="Sun H."/>
            <person name="Florea L."/>
            <person name="Miller W."/>
            <person name="Stoneking T."/>
            <person name="Nhan M."/>
            <person name="Waterston R."/>
            <person name="Wilson R.K."/>
        </authorList>
    </citation>
    <scope>NUCLEOTIDE SEQUENCE [LARGE SCALE GENOMIC DNA]</scope>
    <source>
        <strain>LT2 / SGSC1412 / ATCC 700720</strain>
    </source>
</reference>
<comment type="function">
    <text>Involved in DNA repair and RecF pathway recombination.</text>
</comment>
<comment type="subunit">
    <text evidence="1">Monomer.</text>
</comment>
<comment type="similarity">
    <text evidence="2">Belongs to the RecO family.</text>
</comment>
<organism>
    <name type="scientific">Salmonella typhimurium (strain LT2 / SGSC1412 / ATCC 700720)</name>
    <dbReference type="NCBI Taxonomy" id="99287"/>
    <lineage>
        <taxon>Bacteria</taxon>
        <taxon>Pseudomonadati</taxon>
        <taxon>Pseudomonadota</taxon>
        <taxon>Gammaproteobacteria</taxon>
        <taxon>Enterobacterales</taxon>
        <taxon>Enterobacteriaceae</taxon>
        <taxon>Salmonella</taxon>
    </lineage>
</organism>
<feature type="chain" id="PRO_0000204992" description="DNA repair protein RecO">
    <location>
        <begin position="1"/>
        <end position="242"/>
    </location>
</feature>
<feature type="sequence conflict" description="In Ref. 1." evidence="2" ref="1">
    <location>
        <position position="229"/>
    </location>
</feature>
<evidence type="ECO:0000250" key="1"/>
<evidence type="ECO:0000305" key="2"/>
<keyword id="KW-0227">DNA damage</keyword>
<keyword id="KW-0233">DNA recombination</keyword>
<keyword id="KW-0234">DNA repair</keyword>
<keyword id="KW-1185">Reference proteome</keyword>
<name>RECO_SALTY</name>
<sequence length="242" mass="27472">MEGWQRAFVLHSRPWSETSLMLDVFTEESGRVRLVAKGARSKRSNLKGALQPFTPLLLRYSGRGEVKTLRSAEAVSLALPLSGITLYSGLYINELLSRVLEYETRFSELFFDYLNCIQALAGTTGSPEPALRRFELALLGHLGYGVNFTHCAGSGERVDDTMTYRYREEKGFFASVVIDNNTFTGRHLKALEAREFPDVDTLRAAKRFTRMALKPYLGGKPLKSRELFRQFMPKRTVKTKKD</sequence>
<gene>
    <name type="primary">recO</name>
    <name type="ordered locus">STM2579</name>
</gene>
<accession>P0A285</accession>
<accession>Q56058</accession>
<protein>
    <recommendedName>
        <fullName>DNA repair protein RecO</fullName>
    </recommendedName>
    <alternativeName>
        <fullName>Recombination protein O</fullName>
    </alternativeName>
</protein>
<dbReference type="EMBL" id="U48415">
    <property type="protein sequence ID" value="AAA92442.1"/>
    <property type="molecule type" value="Genomic_DNA"/>
</dbReference>
<dbReference type="EMBL" id="AE006468">
    <property type="protein sequence ID" value="AAL21473.1"/>
    <property type="molecule type" value="Genomic_DNA"/>
</dbReference>
<dbReference type="RefSeq" id="NP_461514.1">
    <property type="nucleotide sequence ID" value="NC_003197.2"/>
</dbReference>
<dbReference type="RefSeq" id="WP_000399380.1">
    <property type="nucleotide sequence ID" value="NC_003197.2"/>
</dbReference>
<dbReference type="SMR" id="P0A285"/>
<dbReference type="STRING" id="99287.STM2579"/>
<dbReference type="PaxDb" id="99287-STM2579"/>
<dbReference type="GeneID" id="1254101"/>
<dbReference type="KEGG" id="stm:STM2579"/>
<dbReference type="PATRIC" id="fig|99287.12.peg.2720"/>
<dbReference type="HOGENOM" id="CLU_066645_1_0_6"/>
<dbReference type="OMA" id="YVLHSRA"/>
<dbReference type="PhylomeDB" id="P0A285"/>
<dbReference type="BioCyc" id="SENT99287:STM2579-MONOMER"/>
<dbReference type="Proteomes" id="UP000001014">
    <property type="component" value="Chromosome"/>
</dbReference>
<dbReference type="GO" id="GO:0043590">
    <property type="term" value="C:bacterial nucleoid"/>
    <property type="evidence" value="ECO:0000318"/>
    <property type="project" value="GO_Central"/>
</dbReference>
<dbReference type="GO" id="GO:0006310">
    <property type="term" value="P:DNA recombination"/>
    <property type="evidence" value="ECO:0007669"/>
    <property type="project" value="UniProtKB-UniRule"/>
</dbReference>
<dbReference type="GO" id="GO:0006302">
    <property type="term" value="P:double-strand break repair"/>
    <property type="evidence" value="ECO:0000318"/>
    <property type="project" value="GO_Central"/>
</dbReference>
<dbReference type="FunFam" id="1.20.1440.120:FF:000001">
    <property type="entry name" value="DNA repair protein RecO"/>
    <property type="match status" value="1"/>
</dbReference>
<dbReference type="FunFam" id="2.40.50.140:FF:000074">
    <property type="entry name" value="DNA repair protein RecO"/>
    <property type="match status" value="1"/>
</dbReference>
<dbReference type="Gene3D" id="2.40.50.140">
    <property type="entry name" value="Nucleic acid-binding proteins"/>
    <property type="match status" value="1"/>
</dbReference>
<dbReference type="Gene3D" id="1.20.1440.120">
    <property type="entry name" value="Recombination protein O, C-terminal domain"/>
    <property type="match status" value="1"/>
</dbReference>
<dbReference type="HAMAP" id="MF_00201">
    <property type="entry name" value="RecO"/>
    <property type="match status" value="1"/>
</dbReference>
<dbReference type="InterPro" id="IPR037278">
    <property type="entry name" value="ARFGAP/RecO"/>
</dbReference>
<dbReference type="InterPro" id="IPR022572">
    <property type="entry name" value="DNA_rep/recomb_RecO_N"/>
</dbReference>
<dbReference type="InterPro" id="IPR012340">
    <property type="entry name" value="NA-bd_OB-fold"/>
</dbReference>
<dbReference type="InterPro" id="IPR003717">
    <property type="entry name" value="RecO"/>
</dbReference>
<dbReference type="InterPro" id="IPR042242">
    <property type="entry name" value="RecO_C"/>
</dbReference>
<dbReference type="NCBIfam" id="TIGR00613">
    <property type="entry name" value="reco"/>
    <property type="match status" value="1"/>
</dbReference>
<dbReference type="PANTHER" id="PTHR33991">
    <property type="entry name" value="DNA REPAIR PROTEIN RECO"/>
    <property type="match status" value="1"/>
</dbReference>
<dbReference type="PANTHER" id="PTHR33991:SF1">
    <property type="entry name" value="DNA REPAIR PROTEIN RECO"/>
    <property type="match status" value="1"/>
</dbReference>
<dbReference type="Pfam" id="PF02565">
    <property type="entry name" value="RecO_C"/>
    <property type="match status" value="1"/>
</dbReference>
<dbReference type="Pfam" id="PF11967">
    <property type="entry name" value="RecO_N"/>
    <property type="match status" value="1"/>
</dbReference>
<dbReference type="SUPFAM" id="SSF57863">
    <property type="entry name" value="ArfGap/RecO-like zinc finger"/>
    <property type="match status" value="1"/>
</dbReference>
<dbReference type="SUPFAM" id="SSF50249">
    <property type="entry name" value="Nucleic acid-binding proteins"/>
    <property type="match status" value="1"/>
</dbReference>
<proteinExistence type="inferred from homology"/>